<keyword id="KW-0963">Cytoplasm</keyword>
<proteinExistence type="inferred from homology"/>
<gene>
    <name evidence="1" type="primary">sufE</name>
    <name type="ordered locus">YPDSF_0749</name>
</gene>
<reference key="1">
    <citation type="submission" date="2007-02" db="EMBL/GenBank/DDBJ databases">
        <title>Complete sequence of chromosome of Yersinia pestis Pestoides F.</title>
        <authorList>
            <consortium name="US DOE Joint Genome Institute"/>
            <person name="Copeland A."/>
            <person name="Lucas S."/>
            <person name="Lapidus A."/>
            <person name="Barry K."/>
            <person name="Detter J.C."/>
            <person name="Glavina del Rio T."/>
            <person name="Hammon N."/>
            <person name="Israni S."/>
            <person name="Dalin E."/>
            <person name="Tice H."/>
            <person name="Pitluck S."/>
            <person name="Di Bartolo G."/>
            <person name="Chain P."/>
            <person name="Malfatti S."/>
            <person name="Shin M."/>
            <person name="Vergez L."/>
            <person name="Schmutz J."/>
            <person name="Larimer F."/>
            <person name="Land M."/>
            <person name="Hauser L."/>
            <person name="Worsham P."/>
            <person name="Chu M."/>
            <person name="Bearden S."/>
            <person name="Garcia E."/>
            <person name="Richardson P."/>
        </authorList>
    </citation>
    <scope>NUCLEOTIDE SEQUENCE [LARGE SCALE GENOMIC DNA]</scope>
    <source>
        <strain>Pestoides F</strain>
    </source>
</reference>
<organism>
    <name type="scientific">Yersinia pestis (strain Pestoides F)</name>
    <dbReference type="NCBI Taxonomy" id="386656"/>
    <lineage>
        <taxon>Bacteria</taxon>
        <taxon>Pseudomonadati</taxon>
        <taxon>Pseudomonadota</taxon>
        <taxon>Gammaproteobacteria</taxon>
        <taxon>Enterobacterales</taxon>
        <taxon>Yersiniaceae</taxon>
        <taxon>Yersinia</taxon>
    </lineage>
</organism>
<name>SUFE_YERPP</name>
<sequence length="140" mass="15581">MAGLPDRDKLIRNFSRCLNWEEKYLYIIELGGQLAPLTEQQRHPENLISGCQSQVWIAMTLSAEGHVIFAGDSDAAIVKGLVAVVFILYHDLTPQQIISLDVRPFFADLALSQHLTPSRSQGLEAMIRAIRTKVANLSAH</sequence>
<evidence type="ECO:0000255" key="1">
    <source>
        <dbReference type="HAMAP-Rule" id="MF_01832"/>
    </source>
</evidence>
<accession>A4TIP3</accession>
<feature type="chain" id="PRO_1000070455" description="Cysteine desulfuration protein SufE">
    <location>
        <begin position="1"/>
        <end position="140"/>
    </location>
</feature>
<feature type="active site" description="Cysteine persulfide intermediate" evidence="1">
    <location>
        <position position="51"/>
    </location>
</feature>
<protein>
    <recommendedName>
        <fullName evidence="1">Cysteine desulfuration protein SufE</fullName>
    </recommendedName>
</protein>
<dbReference type="EMBL" id="CP000668">
    <property type="protein sequence ID" value="ABP39155.1"/>
    <property type="molecule type" value="Genomic_DNA"/>
</dbReference>
<dbReference type="RefSeq" id="WP_002211804.1">
    <property type="nucleotide sequence ID" value="NZ_CP009715.1"/>
</dbReference>
<dbReference type="SMR" id="A4TIP3"/>
<dbReference type="GeneID" id="57976275"/>
<dbReference type="KEGG" id="ypp:YPDSF_0749"/>
<dbReference type="PATRIC" id="fig|386656.14.peg.3119"/>
<dbReference type="UniPathway" id="UPA00266"/>
<dbReference type="GO" id="GO:0005737">
    <property type="term" value="C:cytoplasm"/>
    <property type="evidence" value="ECO:0007669"/>
    <property type="project" value="UniProtKB-SubCell"/>
</dbReference>
<dbReference type="GO" id="GO:0016226">
    <property type="term" value="P:iron-sulfur cluster assembly"/>
    <property type="evidence" value="ECO:0007669"/>
    <property type="project" value="InterPro"/>
</dbReference>
<dbReference type="GO" id="GO:0006790">
    <property type="term" value="P:sulfur compound metabolic process"/>
    <property type="evidence" value="ECO:0007669"/>
    <property type="project" value="InterPro"/>
</dbReference>
<dbReference type="Gene3D" id="3.90.1010.10">
    <property type="match status" value="1"/>
</dbReference>
<dbReference type="HAMAP" id="MF_01832">
    <property type="entry name" value="SufE"/>
    <property type="match status" value="1"/>
</dbReference>
<dbReference type="InterPro" id="IPR023939">
    <property type="entry name" value="Cysteine_desulfuration_SufE"/>
</dbReference>
<dbReference type="InterPro" id="IPR003808">
    <property type="entry name" value="Fe-S_metab-assoc_dom"/>
</dbReference>
<dbReference type="NCBIfam" id="NF006792">
    <property type="entry name" value="PRK09296.1"/>
    <property type="match status" value="1"/>
</dbReference>
<dbReference type="PANTHER" id="PTHR43597:SF3">
    <property type="entry name" value="CYSTEINE DESULFURATION PROTEIN SUFE"/>
    <property type="match status" value="1"/>
</dbReference>
<dbReference type="PANTHER" id="PTHR43597">
    <property type="entry name" value="SULFUR ACCEPTOR PROTEIN CSDE"/>
    <property type="match status" value="1"/>
</dbReference>
<dbReference type="Pfam" id="PF02657">
    <property type="entry name" value="SufE"/>
    <property type="match status" value="1"/>
</dbReference>
<dbReference type="SUPFAM" id="SSF82649">
    <property type="entry name" value="SufE/NifU"/>
    <property type="match status" value="1"/>
</dbReference>
<comment type="function">
    <text evidence="1">Participates in cysteine desulfuration mediated by SufS. Cysteine desulfuration mobilizes sulfur from L-cysteine to yield L-alanine and constitutes an essential step in sulfur metabolism for biosynthesis of a variety of sulfur-containing biomolecules. Functions as a sulfur acceptor for SufS, by mediating the direct transfer of the sulfur atom from the S-sulfanylcysteine of SufS, an intermediate product of cysteine desulfuration process.</text>
</comment>
<comment type="pathway">
    <text evidence="1">Cofactor biosynthesis; iron-sulfur cluster biosynthesis.</text>
</comment>
<comment type="subunit">
    <text evidence="1">Homodimer. Interacts with SufS.</text>
</comment>
<comment type="subcellular location">
    <subcellularLocation>
        <location evidence="1">Cytoplasm</location>
    </subcellularLocation>
</comment>
<comment type="similarity">
    <text evidence="1">Belongs to the SufE family.</text>
</comment>